<organism>
    <name type="scientific">Bacillus subtilis (strain 168)</name>
    <dbReference type="NCBI Taxonomy" id="224308"/>
    <lineage>
        <taxon>Bacteria</taxon>
        <taxon>Bacillati</taxon>
        <taxon>Bacillota</taxon>
        <taxon>Bacilli</taxon>
        <taxon>Bacillales</taxon>
        <taxon>Bacillaceae</taxon>
        <taxon>Bacillus</taxon>
    </lineage>
</organism>
<dbReference type="EMBL" id="L09228">
    <property type="protein sequence ID" value="AAA67486.1"/>
    <property type="molecule type" value="Genomic_DNA"/>
</dbReference>
<dbReference type="EMBL" id="X51510">
    <property type="protein sequence ID" value="CAA35883.1"/>
    <property type="molecule type" value="Genomic_DNA"/>
</dbReference>
<dbReference type="EMBL" id="AL009126">
    <property type="protein sequence ID" value="CAB14255.1"/>
    <property type="molecule type" value="Genomic_DNA"/>
</dbReference>
<dbReference type="PIR" id="S45548">
    <property type="entry name" value="S45548"/>
</dbReference>
<dbReference type="RefSeq" id="NP_390204.1">
    <property type="nucleotide sequence ID" value="NC_000964.3"/>
</dbReference>
<dbReference type="RefSeq" id="WP_003230498.1">
    <property type="nucleotide sequence ID" value="NZ_OZ025638.1"/>
</dbReference>
<dbReference type="SMR" id="P17617"/>
<dbReference type="FunCoup" id="P17617">
    <property type="interactions" value="71"/>
</dbReference>
<dbReference type="STRING" id="224308.BSU23230"/>
<dbReference type="PaxDb" id="224308-BSU23230"/>
<dbReference type="EnsemblBacteria" id="CAB14255">
    <property type="protein sequence ID" value="CAB14255"/>
    <property type="gene ID" value="BSU_23230"/>
</dbReference>
<dbReference type="GeneID" id="938952"/>
<dbReference type="KEGG" id="bsu:BSU23230"/>
<dbReference type="PATRIC" id="fig|224308.179.peg.2530"/>
<dbReference type="eggNOG" id="COG1547">
    <property type="taxonomic scope" value="Bacteria"/>
</dbReference>
<dbReference type="InParanoid" id="P17617"/>
<dbReference type="OrthoDB" id="165483at2"/>
<dbReference type="PhylomeDB" id="P17617"/>
<dbReference type="BioCyc" id="BSUB:BSU23230-MONOMER"/>
<dbReference type="Proteomes" id="UP000001570">
    <property type="component" value="Chromosome"/>
</dbReference>
<dbReference type="Gene3D" id="1.10.3450.10">
    <property type="entry name" value="TTHA0068-like"/>
    <property type="match status" value="1"/>
</dbReference>
<dbReference type="InterPro" id="IPR005500">
    <property type="entry name" value="DUF309"/>
</dbReference>
<dbReference type="InterPro" id="IPR023203">
    <property type="entry name" value="TTHA0068_sf"/>
</dbReference>
<dbReference type="PANTHER" id="PTHR34796">
    <property type="entry name" value="EXPRESSED PROTEIN"/>
    <property type="match status" value="1"/>
</dbReference>
<dbReference type="PANTHER" id="PTHR34796:SF1">
    <property type="entry name" value="EXPRESSED PROTEIN"/>
    <property type="match status" value="1"/>
</dbReference>
<dbReference type="Pfam" id="PF03745">
    <property type="entry name" value="DUF309"/>
    <property type="match status" value="1"/>
</dbReference>
<dbReference type="SUPFAM" id="SSF140663">
    <property type="entry name" value="TTHA0068-like"/>
    <property type="match status" value="1"/>
</dbReference>
<gene>
    <name type="primary">ypuF</name>
    <name type="ordered locus">BSU23230</name>
</gene>
<name>YPUF_BACSU</name>
<keyword id="KW-1185">Reference proteome</keyword>
<protein>
    <recommendedName>
        <fullName>Uncharacterized protein YpuF</fullName>
    </recommendedName>
    <alternativeName>
        <fullName>ORFX6</fullName>
    </alternativeName>
</protein>
<reference key="1">
    <citation type="journal article" date="1993" name="Mol. Microbiol.">
        <title>The organization of the Bacillus subtilis 168 chromosome region between the spoVA and serA genetic loci, based on sequence data.</title>
        <authorList>
            <person name="Sorokin A.V."/>
            <person name="Zumstein E."/>
            <person name="Azevedo V."/>
            <person name="Ehrlich S.D."/>
            <person name="Serror P."/>
        </authorList>
    </citation>
    <scope>NUCLEOTIDE SEQUENCE [GENOMIC DNA]</scope>
    <source>
        <strain>168 / Marburg / ATCC 6051 / DSM 10 / JCM 1465 / NBRC 13719 / NCIMB 3610 / NRRL NRS-744 / VKM B-501</strain>
    </source>
</reference>
<reference key="2">
    <citation type="thesis" date="1989" institute="USSR Academy of Sciences" country="Russia">
        <authorList>
            <person name="Mironov V.N."/>
        </authorList>
    </citation>
    <scope>NUCLEOTIDE SEQUENCE [GENOMIC DNA]</scope>
    <source>
        <strain>168 / SHGW</strain>
    </source>
</reference>
<reference key="3">
    <citation type="journal article" date="1997" name="Nature">
        <title>The complete genome sequence of the Gram-positive bacterium Bacillus subtilis.</title>
        <authorList>
            <person name="Kunst F."/>
            <person name="Ogasawara N."/>
            <person name="Moszer I."/>
            <person name="Albertini A.M."/>
            <person name="Alloni G."/>
            <person name="Azevedo V."/>
            <person name="Bertero M.G."/>
            <person name="Bessieres P."/>
            <person name="Bolotin A."/>
            <person name="Borchert S."/>
            <person name="Borriss R."/>
            <person name="Boursier L."/>
            <person name="Brans A."/>
            <person name="Braun M."/>
            <person name="Brignell S.C."/>
            <person name="Bron S."/>
            <person name="Brouillet S."/>
            <person name="Bruschi C.V."/>
            <person name="Caldwell B."/>
            <person name="Capuano V."/>
            <person name="Carter N.M."/>
            <person name="Choi S.-K."/>
            <person name="Codani J.-J."/>
            <person name="Connerton I.F."/>
            <person name="Cummings N.J."/>
            <person name="Daniel R.A."/>
            <person name="Denizot F."/>
            <person name="Devine K.M."/>
            <person name="Duesterhoeft A."/>
            <person name="Ehrlich S.D."/>
            <person name="Emmerson P.T."/>
            <person name="Entian K.-D."/>
            <person name="Errington J."/>
            <person name="Fabret C."/>
            <person name="Ferrari E."/>
            <person name="Foulger D."/>
            <person name="Fritz C."/>
            <person name="Fujita M."/>
            <person name="Fujita Y."/>
            <person name="Fuma S."/>
            <person name="Galizzi A."/>
            <person name="Galleron N."/>
            <person name="Ghim S.-Y."/>
            <person name="Glaser P."/>
            <person name="Goffeau A."/>
            <person name="Golightly E.J."/>
            <person name="Grandi G."/>
            <person name="Guiseppi G."/>
            <person name="Guy B.J."/>
            <person name="Haga K."/>
            <person name="Haiech J."/>
            <person name="Harwood C.R."/>
            <person name="Henaut A."/>
            <person name="Hilbert H."/>
            <person name="Holsappel S."/>
            <person name="Hosono S."/>
            <person name="Hullo M.-F."/>
            <person name="Itaya M."/>
            <person name="Jones L.-M."/>
            <person name="Joris B."/>
            <person name="Karamata D."/>
            <person name="Kasahara Y."/>
            <person name="Klaerr-Blanchard M."/>
            <person name="Klein C."/>
            <person name="Kobayashi Y."/>
            <person name="Koetter P."/>
            <person name="Koningstein G."/>
            <person name="Krogh S."/>
            <person name="Kumano M."/>
            <person name="Kurita K."/>
            <person name="Lapidus A."/>
            <person name="Lardinois S."/>
            <person name="Lauber J."/>
            <person name="Lazarevic V."/>
            <person name="Lee S.-M."/>
            <person name="Levine A."/>
            <person name="Liu H."/>
            <person name="Masuda S."/>
            <person name="Mauel C."/>
            <person name="Medigue C."/>
            <person name="Medina N."/>
            <person name="Mellado R.P."/>
            <person name="Mizuno M."/>
            <person name="Moestl D."/>
            <person name="Nakai S."/>
            <person name="Noback M."/>
            <person name="Noone D."/>
            <person name="O'Reilly M."/>
            <person name="Ogawa K."/>
            <person name="Ogiwara A."/>
            <person name="Oudega B."/>
            <person name="Park S.-H."/>
            <person name="Parro V."/>
            <person name="Pohl T.M."/>
            <person name="Portetelle D."/>
            <person name="Porwollik S."/>
            <person name="Prescott A.M."/>
            <person name="Presecan E."/>
            <person name="Pujic P."/>
            <person name="Purnelle B."/>
            <person name="Rapoport G."/>
            <person name="Rey M."/>
            <person name="Reynolds S."/>
            <person name="Rieger M."/>
            <person name="Rivolta C."/>
            <person name="Rocha E."/>
            <person name="Roche B."/>
            <person name="Rose M."/>
            <person name="Sadaie Y."/>
            <person name="Sato T."/>
            <person name="Scanlan E."/>
            <person name="Schleich S."/>
            <person name="Schroeter R."/>
            <person name="Scoffone F."/>
            <person name="Sekiguchi J."/>
            <person name="Sekowska A."/>
            <person name="Seror S.J."/>
            <person name="Serror P."/>
            <person name="Shin B.-S."/>
            <person name="Soldo B."/>
            <person name="Sorokin A."/>
            <person name="Tacconi E."/>
            <person name="Takagi T."/>
            <person name="Takahashi H."/>
            <person name="Takemaru K."/>
            <person name="Takeuchi M."/>
            <person name="Tamakoshi A."/>
            <person name="Tanaka T."/>
            <person name="Terpstra P."/>
            <person name="Tognoni A."/>
            <person name="Tosato V."/>
            <person name="Uchiyama S."/>
            <person name="Vandenbol M."/>
            <person name="Vannier F."/>
            <person name="Vassarotti A."/>
            <person name="Viari A."/>
            <person name="Wambutt R."/>
            <person name="Wedler E."/>
            <person name="Wedler H."/>
            <person name="Weitzenegger T."/>
            <person name="Winters P."/>
            <person name="Wipat A."/>
            <person name="Yamamoto H."/>
            <person name="Yamane K."/>
            <person name="Yasumoto K."/>
            <person name="Yata K."/>
            <person name="Yoshida K."/>
            <person name="Yoshikawa H.-F."/>
            <person name="Zumstein E."/>
            <person name="Yoshikawa H."/>
            <person name="Danchin A."/>
        </authorList>
    </citation>
    <scope>NUCLEOTIDE SEQUENCE [LARGE SCALE GENOMIC DNA]</scope>
    <source>
        <strain>168</strain>
    </source>
</reference>
<feature type="chain" id="PRO_0000049731" description="Uncharacterized protein YpuF">
    <location>
        <begin position="1"/>
        <end position="174"/>
    </location>
</feature>
<proteinExistence type="predicted"/>
<accession>P17617</accession>
<sequence>MYPKAYIDYLVEFHATRDYFECHEILEEYWKEDPPKKRKRYWVGFIQLAVALYHHRRQNTAGAKRLMANSIRILQAEHRAVEDLGLDHGRLLELMQSVYEQIETVSAYKSIILPIKDEKLEEACRIECRKKKYTWGQPSALSNIFLIDKHRLRDRTDVIREREKEIERRKKSRD</sequence>